<proteinExistence type="inferred from homology"/>
<feature type="chain" id="PRO_1000195329" description="Protein-export protein SecB">
    <location>
        <begin position="1"/>
        <end position="164"/>
    </location>
</feature>
<accession>B3CUK7</accession>
<evidence type="ECO:0000255" key="1">
    <source>
        <dbReference type="HAMAP-Rule" id="MF_00821"/>
    </source>
</evidence>
<dbReference type="EMBL" id="AP008981">
    <property type="protein sequence ID" value="BAG41054.1"/>
    <property type="molecule type" value="Genomic_DNA"/>
</dbReference>
<dbReference type="RefSeq" id="WP_012462054.1">
    <property type="nucleotide sequence ID" value="NC_010793.1"/>
</dbReference>
<dbReference type="SMR" id="B3CUK7"/>
<dbReference type="KEGG" id="ott:OTT_1596"/>
<dbReference type="HOGENOM" id="CLU_111574_0_0_5"/>
<dbReference type="OrthoDB" id="9795145at2"/>
<dbReference type="Proteomes" id="UP000001033">
    <property type="component" value="Chromosome"/>
</dbReference>
<dbReference type="GO" id="GO:0005737">
    <property type="term" value="C:cytoplasm"/>
    <property type="evidence" value="ECO:0007669"/>
    <property type="project" value="UniProtKB-SubCell"/>
</dbReference>
<dbReference type="GO" id="GO:0051082">
    <property type="term" value="F:unfolded protein binding"/>
    <property type="evidence" value="ECO:0007669"/>
    <property type="project" value="InterPro"/>
</dbReference>
<dbReference type="GO" id="GO:0006457">
    <property type="term" value="P:protein folding"/>
    <property type="evidence" value="ECO:0007669"/>
    <property type="project" value="UniProtKB-UniRule"/>
</dbReference>
<dbReference type="GO" id="GO:0051262">
    <property type="term" value="P:protein tetramerization"/>
    <property type="evidence" value="ECO:0007669"/>
    <property type="project" value="InterPro"/>
</dbReference>
<dbReference type="GO" id="GO:0015031">
    <property type="term" value="P:protein transport"/>
    <property type="evidence" value="ECO:0007669"/>
    <property type="project" value="UniProtKB-UniRule"/>
</dbReference>
<dbReference type="Gene3D" id="3.10.420.10">
    <property type="entry name" value="SecB-like"/>
    <property type="match status" value="1"/>
</dbReference>
<dbReference type="HAMAP" id="MF_00821">
    <property type="entry name" value="SecB"/>
    <property type="match status" value="1"/>
</dbReference>
<dbReference type="InterPro" id="IPR003708">
    <property type="entry name" value="SecB"/>
</dbReference>
<dbReference type="InterPro" id="IPR035958">
    <property type="entry name" value="SecB-like_sf"/>
</dbReference>
<dbReference type="NCBIfam" id="NF004392">
    <property type="entry name" value="PRK05751.1-3"/>
    <property type="match status" value="1"/>
</dbReference>
<dbReference type="NCBIfam" id="TIGR00809">
    <property type="entry name" value="secB"/>
    <property type="match status" value="1"/>
</dbReference>
<dbReference type="PANTHER" id="PTHR36918">
    <property type="match status" value="1"/>
</dbReference>
<dbReference type="PANTHER" id="PTHR36918:SF1">
    <property type="entry name" value="PROTEIN-EXPORT PROTEIN SECB"/>
    <property type="match status" value="1"/>
</dbReference>
<dbReference type="Pfam" id="PF02556">
    <property type="entry name" value="SecB"/>
    <property type="match status" value="1"/>
</dbReference>
<dbReference type="PRINTS" id="PR01594">
    <property type="entry name" value="SECBCHAPRONE"/>
</dbReference>
<dbReference type="SUPFAM" id="SSF54611">
    <property type="entry name" value="SecB-like"/>
    <property type="match status" value="1"/>
</dbReference>
<sequence>MVATSKPKSEPKIAVKAQYVKDLSFENPDPINSLFKITEKPKIDTKLDINITKLSEDNHFEVELSTNVSATCNDKKIFHIEVVYAGIFQLTNISEEDKKFILSVRCPEIIFPYVRQIISESTQKGGFLPLMIDYIDFAEIISNTQTTNNQQELIKPEFDVSNKQ</sequence>
<gene>
    <name evidence="1" type="primary">secB</name>
    <name type="ordered locus">OTT_1596</name>
</gene>
<protein>
    <recommendedName>
        <fullName evidence="1">Protein-export protein SecB</fullName>
    </recommendedName>
</protein>
<name>SECB_ORITI</name>
<reference key="1">
    <citation type="journal article" date="2008" name="DNA Res.">
        <title>The whole-genome sequencing of the obligate intracellular bacterium Orientia tsutsugamushi revealed massive gene amplification during reductive genome evolution.</title>
        <authorList>
            <person name="Nakayama K."/>
            <person name="Yamashita A."/>
            <person name="Kurokawa K."/>
            <person name="Morimoto T."/>
            <person name="Ogawa M."/>
            <person name="Fukuhara M."/>
            <person name="Urakami H."/>
            <person name="Ohnishi M."/>
            <person name="Uchiyama I."/>
            <person name="Ogura Y."/>
            <person name="Ooka T."/>
            <person name="Oshima K."/>
            <person name="Tamura A."/>
            <person name="Hattori M."/>
            <person name="Hayashi T."/>
        </authorList>
    </citation>
    <scope>NUCLEOTIDE SEQUENCE [LARGE SCALE GENOMIC DNA]</scope>
    <source>
        <strain>Ikeda</strain>
    </source>
</reference>
<comment type="function">
    <text evidence="1">One of the proteins required for the normal export of preproteins out of the cell cytoplasm. It is a molecular chaperone that binds to a subset of precursor proteins, maintaining them in a translocation-competent state. It also specifically binds to its receptor SecA.</text>
</comment>
<comment type="subunit">
    <text evidence="1">Homotetramer, a dimer of dimers. One homotetramer interacts with 1 SecA dimer.</text>
</comment>
<comment type="subcellular location">
    <subcellularLocation>
        <location evidence="1">Cytoplasm</location>
    </subcellularLocation>
</comment>
<comment type="similarity">
    <text evidence="1">Belongs to the SecB family.</text>
</comment>
<organism>
    <name type="scientific">Orientia tsutsugamushi (strain Ikeda)</name>
    <name type="common">Rickettsia tsutsugamushi</name>
    <dbReference type="NCBI Taxonomy" id="334380"/>
    <lineage>
        <taxon>Bacteria</taxon>
        <taxon>Pseudomonadati</taxon>
        <taxon>Pseudomonadota</taxon>
        <taxon>Alphaproteobacteria</taxon>
        <taxon>Rickettsiales</taxon>
        <taxon>Rickettsiaceae</taxon>
        <taxon>Rickettsieae</taxon>
        <taxon>Orientia</taxon>
    </lineage>
</organism>
<keyword id="KW-0143">Chaperone</keyword>
<keyword id="KW-0963">Cytoplasm</keyword>
<keyword id="KW-0653">Protein transport</keyword>
<keyword id="KW-0811">Translocation</keyword>
<keyword id="KW-0813">Transport</keyword>